<organism>
    <name type="scientific">Brucella abortus biovar 1 (strain 9-941)</name>
    <dbReference type="NCBI Taxonomy" id="262698"/>
    <lineage>
        <taxon>Bacteria</taxon>
        <taxon>Pseudomonadati</taxon>
        <taxon>Pseudomonadota</taxon>
        <taxon>Alphaproteobacteria</taxon>
        <taxon>Hyphomicrobiales</taxon>
        <taxon>Brucellaceae</taxon>
        <taxon>Brucella/Ochrobactrum group</taxon>
        <taxon>Brucella</taxon>
    </lineage>
</organism>
<proteinExistence type="inferred from homology"/>
<sequence>MAQSRLFFSADKAEAERTYNILEQAFEDDGFPIAITEIDEDRQIFEVSVYVEDDAEEVAARVDALVGPGLFDTEELPDIDWVTHSLEGLKPVRAGHFFVHGSHDRDKIEPGDIAIEIDAGLAFGTGHHGTTAGCLELIEETVETEHPTNALDLGTGSAVLAIAIARLAPIPILATDIDPIAVTVAAENAAKNGVAEHIVTATAEGFGHPIFRSYSPFDLIVANILANPLIELAPSIKEHLAPGGSIILSGILDSQHDAVLAAYQTQGLTHQKTLHREGWVAIHLT</sequence>
<gene>
    <name evidence="1" type="primary">prmA</name>
    <name type="ordered locus">BruAb1_1412</name>
</gene>
<feature type="chain" id="PRO_1000045989" description="Ribosomal protein L11 methyltransferase">
    <location>
        <begin position="1"/>
        <end position="285"/>
    </location>
</feature>
<feature type="binding site" evidence="1">
    <location>
        <position position="131"/>
    </location>
    <ligand>
        <name>S-adenosyl-L-methionine</name>
        <dbReference type="ChEBI" id="CHEBI:59789"/>
    </ligand>
</feature>
<feature type="binding site" evidence="1">
    <location>
        <position position="154"/>
    </location>
    <ligand>
        <name>S-adenosyl-L-methionine</name>
        <dbReference type="ChEBI" id="CHEBI:59789"/>
    </ligand>
</feature>
<feature type="binding site" evidence="1">
    <location>
        <position position="176"/>
    </location>
    <ligand>
        <name>S-adenosyl-L-methionine</name>
        <dbReference type="ChEBI" id="CHEBI:59789"/>
    </ligand>
</feature>
<feature type="binding site" evidence="1">
    <location>
        <position position="223"/>
    </location>
    <ligand>
        <name>S-adenosyl-L-methionine</name>
        <dbReference type="ChEBI" id="CHEBI:59789"/>
    </ligand>
</feature>
<evidence type="ECO:0000255" key="1">
    <source>
        <dbReference type="HAMAP-Rule" id="MF_00735"/>
    </source>
</evidence>
<dbReference type="EC" id="2.1.1.-" evidence="1"/>
<dbReference type="EMBL" id="AE017223">
    <property type="protein sequence ID" value="AAX74742.1"/>
    <property type="molecule type" value="Genomic_DNA"/>
</dbReference>
<dbReference type="RefSeq" id="WP_002966890.1">
    <property type="nucleotide sequence ID" value="NC_006932.1"/>
</dbReference>
<dbReference type="SMR" id="Q57C92"/>
<dbReference type="EnsemblBacteria" id="AAX74742">
    <property type="protein sequence ID" value="AAX74742"/>
    <property type="gene ID" value="BruAb1_1412"/>
</dbReference>
<dbReference type="KEGG" id="bmb:BruAb1_1412"/>
<dbReference type="HOGENOM" id="CLU_049382_3_0_5"/>
<dbReference type="Proteomes" id="UP000000540">
    <property type="component" value="Chromosome I"/>
</dbReference>
<dbReference type="GO" id="GO:0005737">
    <property type="term" value="C:cytoplasm"/>
    <property type="evidence" value="ECO:0007669"/>
    <property type="project" value="UniProtKB-SubCell"/>
</dbReference>
<dbReference type="GO" id="GO:0016279">
    <property type="term" value="F:protein-lysine N-methyltransferase activity"/>
    <property type="evidence" value="ECO:0007669"/>
    <property type="project" value="RHEA"/>
</dbReference>
<dbReference type="GO" id="GO:0032259">
    <property type="term" value="P:methylation"/>
    <property type="evidence" value="ECO:0007669"/>
    <property type="project" value="UniProtKB-KW"/>
</dbReference>
<dbReference type="CDD" id="cd02440">
    <property type="entry name" value="AdoMet_MTases"/>
    <property type="match status" value="1"/>
</dbReference>
<dbReference type="Gene3D" id="3.40.50.150">
    <property type="entry name" value="Vaccinia Virus protein VP39"/>
    <property type="match status" value="1"/>
</dbReference>
<dbReference type="HAMAP" id="MF_00735">
    <property type="entry name" value="Methyltr_PrmA"/>
    <property type="match status" value="1"/>
</dbReference>
<dbReference type="InterPro" id="IPR050078">
    <property type="entry name" value="Ribosomal_L11_MeTrfase_PrmA"/>
</dbReference>
<dbReference type="InterPro" id="IPR004498">
    <property type="entry name" value="Ribosomal_PrmA_MeTrfase"/>
</dbReference>
<dbReference type="InterPro" id="IPR029063">
    <property type="entry name" value="SAM-dependent_MTases_sf"/>
</dbReference>
<dbReference type="NCBIfam" id="NF001784">
    <property type="entry name" value="PRK00517.2-1"/>
    <property type="match status" value="1"/>
</dbReference>
<dbReference type="PANTHER" id="PTHR43648">
    <property type="entry name" value="ELECTRON TRANSFER FLAVOPROTEIN BETA SUBUNIT LYSINE METHYLTRANSFERASE"/>
    <property type="match status" value="1"/>
</dbReference>
<dbReference type="PANTHER" id="PTHR43648:SF1">
    <property type="entry name" value="ELECTRON TRANSFER FLAVOPROTEIN BETA SUBUNIT LYSINE METHYLTRANSFERASE"/>
    <property type="match status" value="1"/>
</dbReference>
<dbReference type="Pfam" id="PF06325">
    <property type="entry name" value="PrmA"/>
    <property type="match status" value="1"/>
</dbReference>
<dbReference type="PIRSF" id="PIRSF000401">
    <property type="entry name" value="RPL11_MTase"/>
    <property type="match status" value="1"/>
</dbReference>
<dbReference type="SUPFAM" id="SSF53335">
    <property type="entry name" value="S-adenosyl-L-methionine-dependent methyltransferases"/>
    <property type="match status" value="1"/>
</dbReference>
<protein>
    <recommendedName>
        <fullName evidence="1">Ribosomal protein L11 methyltransferase</fullName>
        <shortName evidence="1">L11 Mtase</shortName>
        <ecNumber evidence="1">2.1.1.-</ecNumber>
    </recommendedName>
</protein>
<reference key="1">
    <citation type="journal article" date="2005" name="J. Bacteriol.">
        <title>Completion of the genome sequence of Brucella abortus and comparison to the highly similar genomes of Brucella melitensis and Brucella suis.</title>
        <authorList>
            <person name="Halling S.M."/>
            <person name="Peterson-Burch B.D."/>
            <person name="Bricker B.J."/>
            <person name="Zuerner R.L."/>
            <person name="Qing Z."/>
            <person name="Li L.-L."/>
            <person name="Kapur V."/>
            <person name="Alt D.P."/>
            <person name="Olsen S.C."/>
        </authorList>
    </citation>
    <scope>NUCLEOTIDE SEQUENCE [LARGE SCALE GENOMIC DNA]</scope>
    <source>
        <strain>9-941</strain>
    </source>
</reference>
<keyword id="KW-0963">Cytoplasm</keyword>
<keyword id="KW-0489">Methyltransferase</keyword>
<keyword id="KW-0949">S-adenosyl-L-methionine</keyword>
<keyword id="KW-0808">Transferase</keyword>
<name>PRMA_BRUAB</name>
<accession>Q57C92</accession>
<comment type="function">
    <text evidence="1">Methylates ribosomal protein L11.</text>
</comment>
<comment type="catalytic activity">
    <reaction evidence="1">
        <text>L-lysyl-[protein] + 3 S-adenosyl-L-methionine = N(6),N(6),N(6)-trimethyl-L-lysyl-[protein] + 3 S-adenosyl-L-homocysteine + 3 H(+)</text>
        <dbReference type="Rhea" id="RHEA:54192"/>
        <dbReference type="Rhea" id="RHEA-COMP:9752"/>
        <dbReference type="Rhea" id="RHEA-COMP:13826"/>
        <dbReference type="ChEBI" id="CHEBI:15378"/>
        <dbReference type="ChEBI" id="CHEBI:29969"/>
        <dbReference type="ChEBI" id="CHEBI:57856"/>
        <dbReference type="ChEBI" id="CHEBI:59789"/>
        <dbReference type="ChEBI" id="CHEBI:61961"/>
    </reaction>
</comment>
<comment type="subcellular location">
    <subcellularLocation>
        <location evidence="1">Cytoplasm</location>
    </subcellularLocation>
</comment>
<comment type="similarity">
    <text evidence="1">Belongs to the methyltransferase superfamily. PrmA family.</text>
</comment>